<dbReference type="EC" id="6.1.1.1" evidence="1"/>
<dbReference type="EMBL" id="AE017244">
    <property type="protein sequence ID" value="AAZ53440.1"/>
    <property type="molecule type" value="Genomic_DNA"/>
</dbReference>
<dbReference type="RefSeq" id="WP_011289983.1">
    <property type="nucleotide sequence ID" value="NC_007332.1"/>
</dbReference>
<dbReference type="SMR" id="Q4A8U9"/>
<dbReference type="KEGG" id="mhp:MHP7448_0063"/>
<dbReference type="HOGENOM" id="CLU_024003_0_2_14"/>
<dbReference type="Proteomes" id="UP000000553">
    <property type="component" value="Chromosome"/>
</dbReference>
<dbReference type="GO" id="GO:0005829">
    <property type="term" value="C:cytosol"/>
    <property type="evidence" value="ECO:0007669"/>
    <property type="project" value="TreeGrafter"/>
</dbReference>
<dbReference type="GO" id="GO:0005524">
    <property type="term" value="F:ATP binding"/>
    <property type="evidence" value="ECO:0007669"/>
    <property type="project" value="UniProtKB-UniRule"/>
</dbReference>
<dbReference type="GO" id="GO:0003723">
    <property type="term" value="F:RNA binding"/>
    <property type="evidence" value="ECO:0007669"/>
    <property type="project" value="UniProtKB-KW"/>
</dbReference>
<dbReference type="GO" id="GO:0004831">
    <property type="term" value="F:tyrosine-tRNA ligase activity"/>
    <property type="evidence" value="ECO:0007669"/>
    <property type="project" value="UniProtKB-UniRule"/>
</dbReference>
<dbReference type="GO" id="GO:0006437">
    <property type="term" value="P:tyrosyl-tRNA aminoacylation"/>
    <property type="evidence" value="ECO:0007669"/>
    <property type="project" value="UniProtKB-UniRule"/>
</dbReference>
<dbReference type="CDD" id="cd00805">
    <property type="entry name" value="TyrRS_core"/>
    <property type="match status" value="1"/>
</dbReference>
<dbReference type="FunFam" id="1.10.240.10:FF:000001">
    <property type="entry name" value="Tyrosine--tRNA ligase"/>
    <property type="match status" value="1"/>
</dbReference>
<dbReference type="Gene3D" id="3.40.50.620">
    <property type="entry name" value="HUPs"/>
    <property type="match status" value="1"/>
</dbReference>
<dbReference type="Gene3D" id="3.10.290.10">
    <property type="entry name" value="RNA-binding S4 domain"/>
    <property type="match status" value="1"/>
</dbReference>
<dbReference type="Gene3D" id="1.10.240.10">
    <property type="entry name" value="Tyrosyl-Transfer RNA Synthetase"/>
    <property type="match status" value="1"/>
</dbReference>
<dbReference type="HAMAP" id="MF_02006">
    <property type="entry name" value="Tyr_tRNA_synth_type1"/>
    <property type="match status" value="1"/>
</dbReference>
<dbReference type="InterPro" id="IPR002305">
    <property type="entry name" value="aa-tRNA-synth_Ic"/>
</dbReference>
<dbReference type="InterPro" id="IPR014729">
    <property type="entry name" value="Rossmann-like_a/b/a_fold"/>
</dbReference>
<dbReference type="InterPro" id="IPR036986">
    <property type="entry name" value="S4_RNA-bd_sf"/>
</dbReference>
<dbReference type="InterPro" id="IPR054608">
    <property type="entry name" value="SYY-like_C"/>
</dbReference>
<dbReference type="InterPro" id="IPR002307">
    <property type="entry name" value="Tyr-tRNA-ligase"/>
</dbReference>
<dbReference type="InterPro" id="IPR024088">
    <property type="entry name" value="Tyr-tRNA-ligase_bac-type"/>
</dbReference>
<dbReference type="InterPro" id="IPR024107">
    <property type="entry name" value="Tyr-tRNA-ligase_bac_1"/>
</dbReference>
<dbReference type="NCBIfam" id="TIGR00234">
    <property type="entry name" value="tyrS"/>
    <property type="match status" value="1"/>
</dbReference>
<dbReference type="PANTHER" id="PTHR11766:SF0">
    <property type="entry name" value="TYROSINE--TRNA LIGASE, MITOCHONDRIAL"/>
    <property type="match status" value="1"/>
</dbReference>
<dbReference type="PANTHER" id="PTHR11766">
    <property type="entry name" value="TYROSYL-TRNA SYNTHETASE"/>
    <property type="match status" value="1"/>
</dbReference>
<dbReference type="Pfam" id="PF22421">
    <property type="entry name" value="SYY_C-terminal"/>
    <property type="match status" value="1"/>
</dbReference>
<dbReference type="Pfam" id="PF00579">
    <property type="entry name" value="tRNA-synt_1b"/>
    <property type="match status" value="1"/>
</dbReference>
<dbReference type="PRINTS" id="PR01040">
    <property type="entry name" value="TRNASYNTHTYR"/>
</dbReference>
<dbReference type="SUPFAM" id="SSF55174">
    <property type="entry name" value="Alpha-L RNA-binding motif"/>
    <property type="match status" value="1"/>
</dbReference>
<dbReference type="SUPFAM" id="SSF52374">
    <property type="entry name" value="Nucleotidylyl transferase"/>
    <property type="match status" value="1"/>
</dbReference>
<keyword id="KW-0030">Aminoacyl-tRNA synthetase</keyword>
<keyword id="KW-0067">ATP-binding</keyword>
<keyword id="KW-0963">Cytoplasm</keyword>
<keyword id="KW-0436">Ligase</keyword>
<keyword id="KW-0547">Nucleotide-binding</keyword>
<keyword id="KW-0648">Protein biosynthesis</keyword>
<keyword id="KW-0694">RNA-binding</keyword>
<protein>
    <recommendedName>
        <fullName evidence="1">Tyrosine--tRNA ligase</fullName>
        <ecNumber evidence="1">6.1.1.1</ecNumber>
    </recommendedName>
    <alternativeName>
        <fullName evidence="1">Tyrosyl-tRNA synthetase</fullName>
        <shortName evidence="1">TyrRS</shortName>
    </alternativeName>
</protein>
<accession>Q4A8U9</accession>
<comment type="function">
    <text evidence="1">Catalyzes the attachment of tyrosine to tRNA(Tyr) in a two-step reaction: tyrosine is first activated by ATP to form Tyr-AMP and then transferred to the acceptor end of tRNA(Tyr).</text>
</comment>
<comment type="catalytic activity">
    <reaction evidence="1">
        <text>tRNA(Tyr) + L-tyrosine + ATP = L-tyrosyl-tRNA(Tyr) + AMP + diphosphate + H(+)</text>
        <dbReference type="Rhea" id="RHEA:10220"/>
        <dbReference type="Rhea" id="RHEA-COMP:9706"/>
        <dbReference type="Rhea" id="RHEA-COMP:9707"/>
        <dbReference type="ChEBI" id="CHEBI:15378"/>
        <dbReference type="ChEBI" id="CHEBI:30616"/>
        <dbReference type="ChEBI" id="CHEBI:33019"/>
        <dbReference type="ChEBI" id="CHEBI:58315"/>
        <dbReference type="ChEBI" id="CHEBI:78442"/>
        <dbReference type="ChEBI" id="CHEBI:78536"/>
        <dbReference type="ChEBI" id="CHEBI:456215"/>
        <dbReference type="EC" id="6.1.1.1"/>
    </reaction>
</comment>
<comment type="subunit">
    <text evidence="1">Homodimer.</text>
</comment>
<comment type="subcellular location">
    <subcellularLocation>
        <location evidence="1">Cytoplasm</location>
    </subcellularLocation>
</comment>
<comment type="similarity">
    <text evidence="1">Belongs to the class-I aminoacyl-tRNA synthetase family. TyrS type 1 subfamily.</text>
</comment>
<reference key="1">
    <citation type="journal article" date="2005" name="J. Bacteriol.">
        <title>Swine and poultry pathogens: the complete genome sequences of two strains of Mycoplasma hyopneumoniae and a strain of Mycoplasma synoviae.</title>
        <authorList>
            <person name="Vasconcelos A.T.R."/>
            <person name="Ferreira H.B."/>
            <person name="Bizarro C.V."/>
            <person name="Bonatto S.L."/>
            <person name="Carvalho M.O."/>
            <person name="Pinto P.M."/>
            <person name="Almeida D.F."/>
            <person name="Almeida L.G.P."/>
            <person name="Almeida R."/>
            <person name="Alves-Junior L."/>
            <person name="Assuncao E.N."/>
            <person name="Azevedo V.A.C."/>
            <person name="Bogo M.R."/>
            <person name="Brigido M.M."/>
            <person name="Brocchi M."/>
            <person name="Burity H.A."/>
            <person name="Camargo A.A."/>
            <person name="Camargo S.S."/>
            <person name="Carepo M.S."/>
            <person name="Carraro D.M."/>
            <person name="de Mattos Cascardo J.C."/>
            <person name="Castro L.A."/>
            <person name="Cavalcanti G."/>
            <person name="Chemale G."/>
            <person name="Collevatti R.G."/>
            <person name="Cunha C.W."/>
            <person name="Dallagiovanna B."/>
            <person name="Dambros B.P."/>
            <person name="Dellagostin O.A."/>
            <person name="Falcao C."/>
            <person name="Fantinatti-Garboggini F."/>
            <person name="Felipe M.S.S."/>
            <person name="Fiorentin L."/>
            <person name="Franco G.R."/>
            <person name="Freitas N.S.A."/>
            <person name="Frias D."/>
            <person name="Grangeiro T.B."/>
            <person name="Grisard E.C."/>
            <person name="Guimaraes C.T."/>
            <person name="Hungria M."/>
            <person name="Jardim S.N."/>
            <person name="Krieger M.A."/>
            <person name="Laurino J.P."/>
            <person name="Lima L.F.A."/>
            <person name="Lopes M.I."/>
            <person name="Loreto E.L.S."/>
            <person name="Madeira H.M.F."/>
            <person name="Manfio G.P."/>
            <person name="Maranhao A.Q."/>
            <person name="Martinkovics C.T."/>
            <person name="Medeiros S.R.B."/>
            <person name="Moreira M.A.M."/>
            <person name="Neiva M."/>
            <person name="Ramalho-Neto C.E."/>
            <person name="Nicolas M.F."/>
            <person name="Oliveira S.C."/>
            <person name="Paixao R.F.C."/>
            <person name="Pedrosa F.O."/>
            <person name="Pena S.D.J."/>
            <person name="Pereira M."/>
            <person name="Pereira-Ferrari L."/>
            <person name="Piffer I."/>
            <person name="Pinto L.S."/>
            <person name="Potrich D.P."/>
            <person name="Salim A.C.M."/>
            <person name="Santos F.R."/>
            <person name="Schmitt R."/>
            <person name="Schneider M.P.C."/>
            <person name="Schrank A."/>
            <person name="Schrank I.S."/>
            <person name="Schuck A.F."/>
            <person name="Seuanez H.N."/>
            <person name="Silva D.W."/>
            <person name="Silva R."/>
            <person name="Silva S.C."/>
            <person name="Soares C.M.A."/>
            <person name="Souza K.R.L."/>
            <person name="Souza R.C."/>
            <person name="Staats C.C."/>
            <person name="Steffens M.B.R."/>
            <person name="Teixeira S.M.R."/>
            <person name="Urmenyi T.P."/>
            <person name="Vainstein M.H."/>
            <person name="Zuccherato L.W."/>
            <person name="Simpson A.J.G."/>
            <person name="Zaha A."/>
        </authorList>
    </citation>
    <scope>NUCLEOTIDE SEQUENCE [LARGE SCALE GENOMIC DNA]</scope>
    <source>
        <strain>7448</strain>
    </source>
</reference>
<name>SYY_MESH7</name>
<gene>
    <name evidence="1" type="primary">tyrS</name>
    <name type="ordered locus">MHP7448_0063</name>
</gene>
<organism>
    <name type="scientific">Mesomycoplasma hyopneumoniae (strain 7448)</name>
    <name type="common">Mycoplasma hyopneumoniae</name>
    <dbReference type="NCBI Taxonomy" id="262722"/>
    <lineage>
        <taxon>Bacteria</taxon>
        <taxon>Bacillati</taxon>
        <taxon>Mycoplasmatota</taxon>
        <taxon>Mycoplasmoidales</taxon>
        <taxon>Metamycoplasmataceae</taxon>
        <taxon>Mesomycoplasma</taxon>
    </lineage>
</organism>
<sequence>MSYIEKQEFLAELKTRNILKDISSPEKFFNLKPDQGIYIGFDPTATSLHLGNYISISLLKRLQKIGIKVLAVIGGATGMIGDPSFSSKERKLLDFKTLNANKEKIKKQLESFGLPVFDNFEIYKNMNILDFLRDVGKNINISYLLAKESVASRIEVGLSFTEFSYQLIQGWDFKFLAENYRIIGQAGGSDQWGNMVTGLDFIKKSNLDQKDEAFVFTTNLLTDENGQKFGKSLGKPIWLDPEMYSPFHLYQFLLNQSDEQAEKIMLWLSFLDLKVINELIFKHKKDKKQRILQYNLAKQVVFDIHGDKGLEIAKKITKILFEKLDYTKITFNDKLELKKIIPYFKVSFFNANQIIDLGIFKSKRELNEFISHKALEINGSKISNISDITEELKDKSNLFLLRKGKKYFFMIELI</sequence>
<proteinExistence type="inferred from homology"/>
<feature type="chain" id="PRO_0000234732" description="Tyrosine--tRNA ligase">
    <location>
        <begin position="1"/>
        <end position="414"/>
    </location>
</feature>
<feature type="domain" description="S4 RNA-binding" evidence="1">
    <location>
        <begin position="349"/>
        <end position="414"/>
    </location>
</feature>
<feature type="short sequence motif" description="'HIGH' region">
    <location>
        <begin position="43"/>
        <end position="52"/>
    </location>
</feature>
<feature type="short sequence motif" description="'KMSKS' region">
    <location>
        <begin position="228"/>
        <end position="232"/>
    </location>
</feature>
<feature type="binding site" evidence="1">
    <location>
        <position position="38"/>
    </location>
    <ligand>
        <name>L-tyrosine</name>
        <dbReference type="ChEBI" id="CHEBI:58315"/>
    </ligand>
</feature>
<feature type="binding site" evidence="1">
    <location>
        <position position="165"/>
    </location>
    <ligand>
        <name>L-tyrosine</name>
        <dbReference type="ChEBI" id="CHEBI:58315"/>
    </ligand>
</feature>
<feature type="binding site" evidence="1">
    <location>
        <position position="169"/>
    </location>
    <ligand>
        <name>L-tyrosine</name>
        <dbReference type="ChEBI" id="CHEBI:58315"/>
    </ligand>
</feature>
<feature type="binding site" evidence="1">
    <location>
        <position position="231"/>
    </location>
    <ligand>
        <name>ATP</name>
        <dbReference type="ChEBI" id="CHEBI:30616"/>
    </ligand>
</feature>
<evidence type="ECO:0000255" key="1">
    <source>
        <dbReference type="HAMAP-Rule" id="MF_02006"/>
    </source>
</evidence>